<accession>D8RLD3</accession>
<feature type="chain" id="PRO_0000421942" description="(+)-germacrene D synthase">
    <location>
        <begin position="1"/>
        <end position="348"/>
    </location>
</feature>
<feature type="short sequence motif" description="DDXXD motif">
    <location>
        <begin position="97"/>
        <end position="101"/>
    </location>
</feature>
<feature type="binding site" evidence="1">
    <location>
        <position position="97"/>
    </location>
    <ligand>
        <name>Mg(2+)</name>
        <dbReference type="ChEBI" id="CHEBI:18420"/>
        <label>1</label>
    </ligand>
</feature>
<feature type="binding site" evidence="1">
    <location>
        <position position="97"/>
    </location>
    <ligand>
        <name>Mg(2+)</name>
        <dbReference type="ChEBI" id="CHEBI:18420"/>
        <label>2</label>
    </ligand>
</feature>
<feature type="binding site" evidence="1">
    <location>
        <position position="101"/>
    </location>
    <ligand>
        <name>Mg(2+)</name>
        <dbReference type="ChEBI" id="CHEBI:18420"/>
        <label>1</label>
    </ligand>
</feature>
<feature type="binding site" evidence="1">
    <location>
        <position position="101"/>
    </location>
    <ligand>
        <name>Mg(2+)</name>
        <dbReference type="ChEBI" id="CHEBI:18420"/>
        <label>2</label>
    </ligand>
</feature>
<feature type="binding site" evidence="1">
    <location>
        <position position="242"/>
    </location>
    <ligand>
        <name>Mg(2+)</name>
        <dbReference type="ChEBI" id="CHEBI:18420"/>
        <label>3</label>
    </ligand>
</feature>
<feature type="binding site" evidence="1">
    <location>
        <position position="246"/>
    </location>
    <ligand>
        <name>Mg(2+)</name>
        <dbReference type="ChEBI" id="CHEBI:18420"/>
        <label>3</label>
    </ligand>
</feature>
<comment type="function">
    <text evidence="2">Sesquiterpene synthase converting farnesyl diphosphate to eight sesquiterpenes, with (+)-germacrene D and an unidentified oxygenated sesquiterpene as the major products. Has no diterpene synthase activity.</text>
</comment>
<comment type="catalytic activity">
    <reaction evidence="2">
        <text>(2E,6E)-farnesyl diphosphate = (+)-germacrene D + diphosphate</text>
        <dbReference type="Rhea" id="RHEA:30427"/>
        <dbReference type="ChEBI" id="CHEBI:33019"/>
        <dbReference type="ChEBI" id="CHEBI:49046"/>
        <dbReference type="ChEBI" id="CHEBI:175763"/>
        <dbReference type="EC" id="4.2.3.77"/>
    </reaction>
</comment>
<comment type="cofactor">
    <cofactor evidence="1">
        <name>Mg(2+)</name>
        <dbReference type="ChEBI" id="CHEBI:18420"/>
    </cofactor>
    <text evidence="1">Binds 3 Mg(2+) ions per subunit.</text>
</comment>
<comment type="pathway">
    <text>Secondary metabolite biosynthesis; terpenoid biosynthesis.</text>
</comment>
<comment type="induction">
    <text evidence="2">Not regulated by alamethicin treatment.</text>
</comment>
<comment type="domain">
    <text evidence="1">The Asp-Asp-Xaa-Xaa-Asp/Glu (DDXXD/E) motif is important for the catalytic activity, presumably through binding to Mg(2+).</text>
</comment>
<comment type="miscellaneous">
    <text>Selaginella moellendorffii contains two distinct types of functional terpene synthases (TPS) genes, the typical seed plants TPS genes (SmTPSs) and a microbial type TPS genes (SmMTPSLs).</text>
</comment>
<comment type="similarity">
    <text evidence="3">Belongs to the terpene synthase family.</text>
</comment>
<gene>
    <name type="ORF">SELMODRAFT_412756</name>
</gene>
<keyword id="KW-0456">Lyase</keyword>
<keyword id="KW-0460">Magnesium</keyword>
<keyword id="KW-0479">Metal-binding</keyword>
<keyword id="KW-1185">Reference proteome</keyword>
<proteinExistence type="evidence at protein level"/>
<sequence>MAVSSIASIFAAEKSYSIPPVCQLLVSPVLNPLYDAKAESQIDAWCAEFLKLQPGSEKAVFVQESRLGLLAAYVYPTIPYEKIVPVGKFFASFFLADDILDSPEISSSDMRNVATAYKMVLKGRFDEATLPVKNPELLRQMKMLSEVLEELSLHVVDESGRFVDAMTRVLDMFEIESSWLRKQIIPNLDTYLWLREITSGVAPCFALIDGLLQLRLEERGVLDHPLIRKVEEIGTHHIALHNDLMSLRKEWATGNYLNAVPILASNRKCGLNEAIGKVASMLKDLEKDFARTKHEIISSGLAMKQGVMDYVNGIEVWMAGNVEWGWTSARYHGIGWIPPPEKSGTFQL</sequence>
<organism>
    <name type="scientific">Selaginella moellendorffii</name>
    <name type="common">Spikemoss</name>
    <dbReference type="NCBI Taxonomy" id="88036"/>
    <lineage>
        <taxon>Eukaryota</taxon>
        <taxon>Viridiplantae</taxon>
        <taxon>Streptophyta</taxon>
        <taxon>Embryophyta</taxon>
        <taxon>Tracheophyta</taxon>
        <taxon>Lycopodiopsida</taxon>
        <taxon>Selaginellales</taxon>
        <taxon>Selaginellaceae</taxon>
        <taxon>Selaginella</taxon>
    </lineage>
</organism>
<dbReference type="EC" id="4.2.3.77"/>
<dbReference type="EC" id="4.2.3.-"/>
<dbReference type="EMBL" id="JX413785">
    <property type="protein sequence ID" value="AFR34005.1"/>
    <property type="molecule type" value="mRNA"/>
</dbReference>
<dbReference type="EMBL" id="GL377583">
    <property type="protein sequence ID" value="EFJ26899.1"/>
    <property type="molecule type" value="Genomic_DNA"/>
</dbReference>
<dbReference type="RefSeq" id="XP_002971982.1">
    <property type="nucleotide sequence ID" value="XM_002971936.1"/>
</dbReference>
<dbReference type="SMR" id="D8RLD3"/>
<dbReference type="EnsemblPlants" id="EFJ26899">
    <property type="protein sequence ID" value="EFJ26899"/>
    <property type="gene ID" value="SELMODRAFT_412756"/>
</dbReference>
<dbReference type="Gramene" id="EFJ26899">
    <property type="protein sequence ID" value="EFJ26899"/>
    <property type="gene ID" value="SELMODRAFT_412756"/>
</dbReference>
<dbReference type="KEGG" id="smo:SELMODRAFT_412756"/>
<dbReference type="eggNOG" id="ENOG502SJ0F">
    <property type="taxonomic scope" value="Eukaryota"/>
</dbReference>
<dbReference type="HOGENOM" id="CLU_042538_2_1_1"/>
<dbReference type="InParanoid" id="D8RLD3"/>
<dbReference type="OrthoDB" id="2861623at2759"/>
<dbReference type="UniPathway" id="UPA00213"/>
<dbReference type="Proteomes" id="UP000001514">
    <property type="component" value="Unassembled WGS sequence"/>
</dbReference>
<dbReference type="GO" id="GO:0046872">
    <property type="term" value="F:metal ion binding"/>
    <property type="evidence" value="ECO:0007669"/>
    <property type="project" value="UniProtKB-KW"/>
</dbReference>
<dbReference type="GO" id="GO:0010333">
    <property type="term" value="F:terpene synthase activity"/>
    <property type="evidence" value="ECO:0007669"/>
    <property type="project" value="InterPro"/>
</dbReference>
<dbReference type="GO" id="GO:0016114">
    <property type="term" value="P:terpenoid biosynthetic process"/>
    <property type="evidence" value="ECO:0007669"/>
    <property type="project" value="UniProtKB-UniPathway"/>
</dbReference>
<dbReference type="Gene3D" id="1.10.600.10">
    <property type="entry name" value="Farnesyl Diphosphate Synthase"/>
    <property type="match status" value="1"/>
</dbReference>
<dbReference type="InterPro" id="IPR008949">
    <property type="entry name" value="Isoprenoid_synthase_dom_sf"/>
</dbReference>
<dbReference type="InterPro" id="IPR034686">
    <property type="entry name" value="Terpene_cyclase-like_2"/>
</dbReference>
<dbReference type="PANTHER" id="PTHR35201:SF4">
    <property type="entry name" value="BETA-PINACENE SYNTHASE-RELATED"/>
    <property type="match status" value="1"/>
</dbReference>
<dbReference type="PANTHER" id="PTHR35201">
    <property type="entry name" value="TERPENE SYNTHASE"/>
    <property type="match status" value="1"/>
</dbReference>
<dbReference type="Pfam" id="PF19086">
    <property type="entry name" value="Terpene_syn_C_2"/>
    <property type="match status" value="1"/>
</dbReference>
<dbReference type="SFLD" id="SFLDS00005">
    <property type="entry name" value="Isoprenoid_Synthase_Type_I"/>
    <property type="match status" value="1"/>
</dbReference>
<dbReference type="SFLD" id="SFLDG01020">
    <property type="entry name" value="Terpene_Cyclase_Like_2"/>
    <property type="match status" value="1"/>
</dbReference>
<dbReference type="SUPFAM" id="SSF48576">
    <property type="entry name" value="Terpenoid synthases"/>
    <property type="match status" value="1"/>
</dbReference>
<reference key="1">
    <citation type="journal article" date="2012" name="Proc. Natl. Acad. Sci. U.S.A.">
        <title>Nonseed plant Selaginella moellendorfii has both seed plant and microbial types of terpene synthases.</title>
        <authorList>
            <person name="Li G."/>
            <person name="Kollner T.G."/>
            <person name="Yin Y."/>
            <person name="Jiang Y."/>
            <person name="Chen H."/>
            <person name="Xu Y."/>
            <person name="Gershenzon J."/>
            <person name="Pichersky E."/>
            <person name="Chen F."/>
        </authorList>
    </citation>
    <scope>NUCLEOTIDE SEQUENCE [MRNA]</scope>
    <scope>FUNCTION</scope>
    <scope>CATALYTIC ACTIVITY</scope>
    <scope>INDUCTION BY ELICITOR</scope>
    <scope>GENE FAMILY</scope>
    <scope>NOMENCLATURE</scope>
</reference>
<reference key="2">
    <citation type="journal article" date="2011" name="Science">
        <title>The Selaginella genome identifies genetic changes associated with the evolution of vascular plants.</title>
        <authorList>
            <person name="Banks J.A."/>
            <person name="Nishiyama T."/>
            <person name="Hasebe M."/>
            <person name="Bowman J.L."/>
            <person name="Gribskov M."/>
            <person name="dePamphilis C."/>
            <person name="Albert V.A."/>
            <person name="Aono N."/>
            <person name="Aoyama T."/>
            <person name="Ambrose B.A."/>
            <person name="Ashton N.W."/>
            <person name="Axtell M.J."/>
            <person name="Barker E."/>
            <person name="Barker M.S."/>
            <person name="Bennetzen J.L."/>
            <person name="Bonawitz N.D."/>
            <person name="Chapple C."/>
            <person name="Cheng C."/>
            <person name="Correa L.G."/>
            <person name="Dacre M."/>
            <person name="DeBarry J."/>
            <person name="Dreyer I."/>
            <person name="Elias M."/>
            <person name="Engstrom E.M."/>
            <person name="Estelle M."/>
            <person name="Feng L."/>
            <person name="Finet C."/>
            <person name="Floyd S.K."/>
            <person name="Frommer W.B."/>
            <person name="Fujita T."/>
            <person name="Gramzow L."/>
            <person name="Gutensohn M."/>
            <person name="Harholt J."/>
            <person name="Hattori M."/>
            <person name="Heyl A."/>
            <person name="Hirai T."/>
            <person name="Hiwatashi Y."/>
            <person name="Ishikawa M."/>
            <person name="Iwata M."/>
            <person name="Karol K.G."/>
            <person name="Koehler B."/>
            <person name="Kolukisaoglu U."/>
            <person name="Kubo M."/>
            <person name="Kurata T."/>
            <person name="Lalonde S."/>
            <person name="Li K."/>
            <person name="Li Y."/>
            <person name="Litt A."/>
            <person name="Lyons E."/>
            <person name="Manning G."/>
            <person name="Maruyama T."/>
            <person name="Michael T.P."/>
            <person name="Mikami K."/>
            <person name="Miyazaki S."/>
            <person name="Morinaga S."/>
            <person name="Murata T."/>
            <person name="Mueller-Roeber B."/>
            <person name="Nelson D.R."/>
            <person name="Obara M."/>
            <person name="Oguri Y."/>
            <person name="Olmstead R.G."/>
            <person name="Onodera N."/>
            <person name="Petersen B.L."/>
            <person name="Pils B."/>
            <person name="Prigge M."/>
            <person name="Rensing S.A."/>
            <person name="Riano-Pachon D.M."/>
            <person name="Roberts A.W."/>
            <person name="Sato Y."/>
            <person name="Scheller H.V."/>
            <person name="Schulz B."/>
            <person name="Schulz C."/>
            <person name="Shakirov E.V."/>
            <person name="Shibagaki N."/>
            <person name="Shinohara N."/>
            <person name="Shippen D.E."/>
            <person name="Soerensen I."/>
            <person name="Sotooka R."/>
            <person name="Sugimoto N."/>
            <person name="Sugita M."/>
            <person name="Sumikawa N."/>
            <person name="Tanurdzic M."/>
            <person name="Theissen G."/>
            <person name="Ulvskov P."/>
            <person name="Wakazuki S."/>
            <person name="Weng J.K."/>
            <person name="Willats W.W."/>
            <person name="Wipf D."/>
            <person name="Wolf P.G."/>
            <person name="Yang L."/>
            <person name="Zimmer A.D."/>
            <person name="Zhu Q."/>
            <person name="Mitros T."/>
            <person name="Hellsten U."/>
            <person name="Loque D."/>
            <person name="Otillar R."/>
            <person name="Salamov A."/>
            <person name="Schmutz J."/>
            <person name="Shapiro H."/>
            <person name="Lindquist E."/>
            <person name="Lucas S."/>
            <person name="Rokhsar D."/>
            <person name="Grigoriev I.V."/>
        </authorList>
    </citation>
    <scope>NUCLEOTIDE SEQUENCE [LARGE SCALE GENOMIC DNA]</scope>
</reference>
<evidence type="ECO:0000250" key="1"/>
<evidence type="ECO:0000269" key="2">
    <source>
    </source>
</evidence>
<evidence type="ECO:0000305" key="3"/>
<protein>
    <recommendedName>
        <fullName>(+)-germacrene D synthase</fullName>
        <ecNumber>4.2.3.77</ecNumber>
    </recommendedName>
    <alternativeName>
        <fullName>Microbial Terpene synthase-like protein 17</fullName>
        <shortName>SmMTPSL17</shortName>
        <ecNumber>4.2.3.-</ecNumber>
    </alternativeName>
</protein>
<name>MTS17_SELML</name>